<proteinExistence type="inferred from homology"/>
<evidence type="ECO:0000250" key="1"/>
<evidence type="ECO:0000255" key="2"/>
<evidence type="ECO:0000256" key="3">
    <source>
        <dbReference type="SAM" id="MobiDB-lite"/>
    </source>
</evidence>
<evidence type="ECO:0000305" key="4"/>
<protein>
    <recommendedName>
        <fullName>Autophagy-related protein 22-2</fullName>
    </recommendedName>
</protein>
<keyword id="KW-0029">Amino-acid transport</keyword>
<keyword id="KW-0072">Autophagy</keyword>
<keyword id="KW-0325">Glycoprotein</keyword>
<keyword id="KW-0472">Membrane</keyword>
<keyword id="KW-1185">Reference proteome</keyword>
<keyword id="KW-0812">Transmembrane</keyword>
<keyword id="KW-1133">Transmembrane helix</keyword>
<keyword id="KW-0813">Transport</keyword>
<keyword id="KW-0926">Vacuole</keyword>
<gene>
    <name type="primary">atg22-2</name>
    <name type="ORF">An09g03630</name>
</gene>
<feature type="chain" id="PRO_0000318017" description="Autophagy-related protein 22-2">
    <location>
        <begin position="1"/>
        <end position="600"/>
    </location>
</feature>
<feature type="transmembrane region" description="Helical" evidence="2">
    <location>
        <begin position="41"/>
        <end position="61"/>
    </location>
</feature>
<feature type="transmembrane region" description="Helical" evidence="2">
    <location>
        <begin position="117"/>
        <end position="137"/>
    </location>
</feature>
<feature type="transmembrane region" description="Helical" evidence="2">
    <location>
        <begin position="149"/>
        <end position="168"/>
    </location>
</feature>
<feature type="transmembrane region" description="Helical" evidence="2">
    <location>
        <begin position="186"/>
        <end position="206"/>
    </location>
</feature>
<feature type="transmembrane region" description="Helical" evidence="2">
    <location>
        <begin position="271"/>
        <end position="291"/>
    </location>
</feature>
<feature type="transmembrane region" description="Helical" evidence="2">
    <location>
        <begin position="304"/>
        <end position="324"/>
    </location>
</feature>
<feature type="transmembrane region" description="Helical" evidence="2">
    <location>
        <begin position="378"/>
        <end position="398"/>
    </location>
</feature>
<feature type="transmembrane region" description="Helical" evidence="2">
    <location>
        <begin position="414"/>
        <end position="434"/>
    </location>
</feature>
<feature type="transmembrane region" description="Helical" evidence="2">
    <location>
        <begin position="449"/>
        <end position="469"/>
    </location>
</feature>
<feature type="transmembrane region" description="Helical" evidence="2">
    <location>
        <begin position="484"/>
        <end position="506"/>
    </location>
</feature>
<feature type="transmembrane region" description="Helical" evidence="2">
    <location>
        <begin position="526"/>
        <end position="546"/>
    </location>
</feature>
<feature type="transmembrane region" description="Helical" evidence="2">
    <location>
        <begin position="549"/>
        <end position="569"/>
    </location>
</feature>
<feature type="region of interest" description="Disordered" evidence="3">
    <location>
        <begin position="1"/>
        <end position="30"/>
    </location>
</feature>
<feature type="region of interest" description="Disordered" evidence="3">
    <location>
        <begin position="234"/>
        <end position="257"/>
    </location>
</feature>
<feature type="glycosylation site" description="N-linked (GlcNAc...) asparagine" evidence="2">
    <location>
        <position position="444"/>
    </location>
</feature>
<dbReference type="EMBL" id="AM270199">
    <property type="protein sequence ID" value="CAK96806.1"/>
    <property type="molecule type" value="Genomic_DNA"/>
</dbReference>
<dbReference type="GlyCosmos" id="A2QTX8">
    <property type="glycosylation" value="1 site, No reported glycans"/>
</dbReference>
<dbReference type="EnsemblFungi" id="CAK96806">
    <property type="protein sequence ID" value="CAK96806"/>
    <property type="gene ID" value="An09g03630"/>
</dbReference>
<dbReference type="VEuPathDB" id="FungiDB:An09g03630"/>
<dbReference type="HOGENOM" id="CLU_017518_1_0_1"/>
<dbReference type="Proteomes" id="UP000006706">
    <property type="component" value="Chromosome 1L"/>
</dbReference>
<dbReference type="GO" id="GO:0005774">
    <property type="term" value="C:vacuolar membrane"/>
    <property type="evidence" value="ECO:0007669"/>
    <property type="project" value="UniProtKB-SubCell"/>
</dbReference>
<dbReference type="GO" id="GO:0032974">
    <property type="term" value="P:amino acid transmembrane export from vacuole"/>
    <property type="evidence" value="ECO:0007669"/>
    <property type="project" value="InterPro"/>
</dbReference>
<dbReference type="GO" id="GO:0006914">
    <property type="term" value="P:autophagy"/>
    <property type="evidence" value="ECO:0007669"/>
    <property type="project" value="UniProtKB-KW"/>
</dbReference>
<dbReference type="CDD" id="cd17483">
    <property type="entry name" value="MFS_Atg22_like"/>
    <property type="match status" value="1"/>
</dbReference>
<dbReference type="Gene3D" id="1.20.1250.20">
    <property type="entry name" value="MFS general substrate transporter like domains"/>
    <property type="match status" value="1"/>
</dbReference>
<dbReference type="InterPro" id="IPR044738">
    <property type="entry name" value="Atg22"/>
</dbReference>
<dbReference type="InterPro" id="IPR024671">
    <property type="entry name" value="Atg22-like"/>
</dbReference>
<dbReference type="InterPro" id="IPR050495">
    <property type="entry name" value="ATG22/LtaA_families"/>
</dbReference>
<dbReference type="InterPro" id="IPR036259">
    <property type="entry name" value="MFS_trans_sf"/>
</dbReference>
<dbReference type="PANTHER" id="PTHR23519">
    <property type="entry name" value="AUTOPHAGY-RELATED PROTEIN 22"/>
    <property type="match status" value="1"/>
</dbReference>
<dbReference type="PANTHER" id="PTHR23519:SF3">
    <property type="entry name" value="AUTOPHAGY-RELATED PROTEIN 22-2"/>
    <property type="match status" value="1"/>
</dbReference>
<dbReference type="Pfam" id="PF11700">
    <property type="entry name" value="ATG22"/>
    <property type="match status" value="1"/>
</dbReference>
<dbReference type="SUPFAM" id="SSF103473">
    <property type="entry name" value="MFS general substrate transporter"/>
    <property type="match status" value="1"/>
</dbReference>
<sequence length="600" mass="64957">MAFASPPASPPDEDGQARAPRYPGEDTTPTSRQEIWGWYAYGIAAEVFAVCGVGSFLPLTLEQLARERGFLQSSHLPCVGPDSPSAPKESSPAMFRRDDTNEQCVVGLMGLEINTASFAMYTFSLAVLVQALTLISFSALADYENNRKTLLVTFGFIGSATSMLFVFIAPPVFVLGALLVVVGVVCLGSSFVVLNSFLPVLVASDPSIQNSNKESAAELHRLDPEAEYVHARTSFDGDEPTHRPPTGLGLGGATGTSSPELQLSTKISSKGVGLGYCAAVFVQILSILLLFTLSKTSISKASGTLPLRFVLLLVGIWWFSFTMVSRRWLRNRPGPPLESTSTGASSHQPRWRIWLHLVAFAWKSLWKTVKIALKLREVIVFLVAWFLLSDAMATVSGTAILFARTELKMSTTMVALLSITATLSGMAGAFLWPIVSRYFGLKSNHTIMVCIALFELIPLYGMLAYIPLFKKWGVIGLQQPWEIYPLAIVHGVVSGGLSSYCRSFFGLLIPPGMEAAFYALYAATDKGSSFIGPAIVGVLIDATGQVRSGFFFIAVLIVLPIPLVWMVDAEKGRKEGLKISEDVVRGGEGEDEEVEGLLAR</sequence>
<organism>
    <name type="scientific">Aspergillus niger (strain ATCC MYA-4892 / CBS 513.88 / FGSC A1513)</name>
    <dbReference type="NCBI Taxonomy" id="425011"/>
    <lineage>
        <taxon>Eukaryota</taxon>
        <taxon>Fungi</taxon>
        <taxon>Dikarya</taxon>
        <taxon>Ascomycota</taxon>
        <taxon>Pezizomycotina</taxon>
        <taxon>Eurotiomycetes</taxon>
        <taxon>Eurotiomycetidae</taxon>
        <taxon>Eurotiales</taxon>
        <taxon>Aspergillaceae</taxon>
        <taxon>Aspergillus</taxon>
        <taxon>Aspergillus subgen. Circumdati</taxon>
    </lineage>
</organism>
<reference key="1">
    <citation type="journal article" date="2007" name="Nat. Biotechnol.">
        <title>Genome sequencing and analysis of the versatile cell factory Aspergillus niger CBS 513.88.</title>
        <authorList>
            <person name="Pel H.J."/>
            <person name="de Winde J.H."/>
            <person name="Archer D.B."/>
            <person name="Dyer P.S."/>
            <person name="Hofmann G."/>
            <person name="Schaap P.J."/>
            <person name="Turner G."/>
            <person name="de Vries R.P."/>
            <person name="Albang R."/>
            <person name="Albermann K."/>
            <person name="Andersen M.R."/>
            <person name="Bendtsen J.D."/>
            <person name="Benen J.A.E."/>
            <person name="van den Berg M."/>
            <person name="Breestraat S."/>
            <person name="Caddick M.X."/>
            <person name="Contreras R."/>
            <person name="Cornell M."/>
            <person name="Coutinho P.M."/>
            <person name="Danchin E.G.J."/>
            <person name="Debets A.J.M."/>
            <person name="Dekker P."/>
            <person name="van Dijck P.W.M."/>
            <person name="van Dijk A."/>
            <person name="Dijkhuizen L."/>
            <person name="Driessen A.J.M."/>
            <person name="d'Enfert C."/>
            <person name="Geysens S."/>
            <person name="Goosen C."/>
            <person name="Groot G.S.P."/>
            <person name="de Groot P.W.J."/>
            <person name="Guillemette T."/>
            <person name="Henrissat B."/>
            <person name="Herweijer M."/>
            <person name="van den Hombergh J.P.T.W."/>
            <person name="van den Hondel C.A.M.J.J."/>
            <person name="van der Heijden R.T.J.M."/>
            <person name="van der Kaaij R.M."/>
            <person name="Klis F.M."/>
            <person name="Kools H.J."/>
            <person name="Kubicek C.P."/>
            <person name="van Kuyk P.A."/>
            <person name="Lauber J."/>
            <person name="Lu X."/>
            <person name="van der Maarel M.J.E.C."/>
            <person name="Meulenberg R."/>
            <person name="Menke H."/>
            <person name="Mortimer M.A."/>
            <person name="Nielsen J."/>
            <person name="Oliver S.G."/>
            <person name="Olsthoorn M."/>
            <person name="Pal K."/>
            <person name="van Peij N.N.M.E."/>
            <person name="Ram A.F.J."/>
            <person name="Rinas U."/>
            <person name="Roubos J.A."/>
            <person name="Sagt C.M.J."/>
            <person name="Schmoll M."/>
            <person name="Sun J."/>
            <person name="Ussery D."/>
            <person name="Varga J."/>
            <person name="Vervecken W."/>
            <person name="van de Vondervoort P.J.J."/>
            <person name="Wedler H."/>
            <person name="Woesten H.A.B."/>
            <person name="Zeng A.-P."/>
            <person name="van Ooyen A.J.J."/>
            <person name="Visser J."/>
            <person name="Stam H."/>
        </authorList>
    </citation>
    <scope>NUCLEOTIDE SEQUENCE [LARGE SCALE GENOMIC DNA]</scope>
    <source>
        <strain>ATCC MYA-4892 / CBS 513.88 / FGSC A1513</strain>
    </source>
</reference>
<comment type="function">
    <text evidence="1">Vacuolar effluxer which mediate the efflux of amino acids resulting from autophagic degradation. The release of autophagic amino acids allows the maintenance of protein synthesis and viability during nitrogen starvation (By similarity).</text>
</comment>
<comment type="subcellular location">
    <subcellularLocation>
        <location evidence="1">Vacuole membrane</location>
        <topology evidence="1">Multi-pass membrane protein</topology>
    </subcellularLocation>
    <text evidence="1">Vacuole and punctate structures.</text>
</comment>
<comment type="similarity">
    <text evidence="4">Belongs to the ATG22 family.</text>
</comment>
<accession>A2QTX8</accession>
<name>AT222_ASPNC</name>